<name>AHBM_STRCM</name>
<evidence type="ECO:0000250" key="1">
    <source>
        <dbReference type="UniProtKB" id="A0A0H3LKL4"/>
    </source>
</evidence>
<evidence type="ECO:0000250" key="2">
    <source>
        <dbReference type="UniProtKB" id="Q88FY2"/>
    </source>
</evidence>
<evidence type="ECO:0000269" key="3">
    <source>
    </source>
</evidence>
<evidence type="ECO:0000269" key="4">
    <source>
    </source>
</evidence>
<evidence type="ECO:0000303" key="5">
    <source>
    </source>
</evidence>
<evidence type="ECO:0000305" key="6"/>
<evidence type="ECO:0000305" key="7">
    <source>
    </source>
</evidence>
<evidence type="ECO:0000305" key="8">
    <source>
    </source>
</evidence>
<comment type="function">
    <text evidence="3 4">Part of a gene cluster involved in the biosynthesis of cremeomycin, a light-sensitive o-diazoquinone with antibacterial and antiproliferative effects (PubMed:26278892, PubMed:26689788). Catalyzes the hydroxylation of 3-amino-4-hydroxybenzoate (3,4-AHBA) to 3-amino-2,4-dihydroxybenzoate (3,2,4-ADHBA) (PubMed:26278892).</text>
</comment>
<comment type="catalytic activity">
    <reaction evidence="3">
        <text>3-amino-4-hydroxybenzoate + NADPH + O2 + H(+) = 3-amino-2,4-dihydroxybenzoate + NADP(+) + H2O</text>
        <dbReference type="Rhea" id="RHEA:68992"/>
        <dbReference type="ChEBI" id="CHEBI:15377"/>
        <dbReference type="ChEBI" id="CHEBI:15378"/>
        <dbReference type="ChEBI" id="CHEBI:15379"/>
        <dbReference type="ChEBI" id="CHEBI:57783"/>
        <dbReference type="ChEBI" id="CHEBI:58349"/>
        <dbReference type="ChEBI" id="CHEBI:60005"/>
        <dbReference type="ChEBI" id="CHEBI:180657"/>
        <dbReference type="EC" id="1.14.13.249"/>
    </reaction>
    <physiologicalReaction direction="left-to-right" evidence="3">
        <dbReference type="Rhea" id="RHEA:68993"/>
    </physiologicalReaction>
</comment>
<comment type="cofactor">
    <cofactor evidence="3">
        <name>FAD</name>
        <dbReference type="ChEBI" id="CHEBI:57692"/>
    </cofactor>
    <text evidence="2">Binds 1 FAD molecule per subunit.</text>
</comment>
<comment type="pathway">
    <text evidence="7 8">Antibiotic biosynthesis.</text>
</comment>
<comment type="similarity">
    <text evidence="6">Belongs to the 6-hydroxynicotinate 3-monooxygenase family.</text>
</comment>
<proteinExistence type="evidence at protein level"/>
<accession>A0A0K2JKU1</accession>
<sequence length="394" mass="42714">MVDRDIRIAVVGAGVAGLTVAALLRDRGVDCRVFERAPRLVAVGAGIQLSPNGVRVLHGLGLRDSLAATGVRARAIETRSWADGAPIARTPLGDRCEELYGAPYYLIHRADLHRCLTSLLPASAVELGRACARVEERPDAVRLHFTDGTMADADLVIGADGVHSVVRRSVVRDAPRYAGYAVHRGLVPASVVPSFRDDPRVMFWLGPGRHVTYYPVAGGRTVHFSAVGVSPEESPGGGPEDLGAAFGHWHEEVRRVVTSASSVTRWGLYDRDIPDRYATGRVVLLGDAAHPTLPYLSQGANQALEDVTTLVGCLDARPGAPQEAVRQYESLRLPRTAEVHRRARRLAEEFHLPDGPECTDRDQRMRATQDPTHLAWLYGRTAGLPDASDLAPRP</sequence>
<organism>
    <name type="scientific">Streptomyces cremeus</name>
    <dbReference type="NCBI Taxonomy" id="66881"/>
    <lineage>
        <taxon>Bacteria</taxon>
        <taxon>Bacillati</taxon>
        <taxon>Actinomycetota</taxon>
        <taxon>Actinomycetes</taxon>
        <taxon>Kitasatosporales</taxon>
        <taxon>Streptomycetaceae</taxon>
        <taxon>Streptomyces</taxon>
    </lineage>
</organism>
<gene>
    <name evidence="5" type="primary">creL</name>
</gene>
<feature type="chain" id="PRO_0000457473" description="3-amino-4-hydroxybenzoate 2-monooxygenase">
    <location>
        <begin position="1"/>
        <end position="394"/>
    </location>
</feature>
<feature type="active site" description="Proton acceptor" evidence="1">
    <location>
        <position position="214"/>
    </location>
</feature>
<feature type="binding site" evidence="2">
    <location>
        <position position="16"/>
    </location>
    <ligand>
        <name>FAD</name>
        <dbReference type="ChEBI" id="CHEBI:57692"/>
    </ligand>
</feature>
<feature type="binding site" evidence="2">
    <location>
        <position position="109"/>
    </location>
    <ligand>
        <name>FAD</name>
        <dbReference type="ChEBI" id="CHEBI:57692"/>
    </ligand>
</feature>
<feature type="binding site" evidence="2">
    <location>
        <position position="287"/>
    </location>
    <ligand>
        <name>FAD</name>
        <dbReference type="ChEBI" id="CHEBI:57692"/>
    </ligand>
</feature>
<protein>
    <recommendedName>
        <fullName evidence="6">3-amino-4-hydroxybenzoate 2-monooxygenase</fullName>
        <ecNumber evidence="3">1.14.13.249</ecNumber>
    </recommendedName>
</protein>
<reference key="1">
    <citation type="journal article" date="2015" name="ChemBioChem">
        <title>The cremeomycin biosynthetic gene cluster encodes a pathway for diazo formation.</title>
        <authorList>
            <person name="Waldman A.J."/>
            <person name="Pechersky Y."/>
            <person name="Wang P."/>
            <person name="Wang J.X."/>
            <person name="Balskus E.P."/>
        </authorList>
    </citation>
    <scope>NUCLEOTIDE SEQUENCE [GENOMIC DNA]</scope>
    <scope>FUNCTION</scope>
    <scope>CATALYTIC ACTIVITY</scope>
    <scope>COFACTOR</scope>
    <source>
        <strain>ATCC 19744 / DSM 40147 / JCM 4362 / NBRC 12760 / NRRL 3241 / INA 815/54</strain>
    </source>
</reference>
<reference key="2">
    <citation type="journal article" date="2016" name="Nat. Chem. Biol.">
        <title>A nitrous acid biosynthetic pathway for diazo group formation in bacteria.</title>
        <authorList>
            <person name="Sugai Y."/>
            <person name="Katsuyama Y."/>
            <person name="Ohnishi Y."/>
        </authorList>
    </citation>
    <scope>NUCLEOTIDE SEQUENCE [GENOMIC DNA]</scope>
    <scope>FUNCTION</scope>
    <source>
        <strain>ATCC 19744 / DSM 40147 / JCM 4362 / NBRC 12760 / NRRL 3241 / INA 815/54</strain>
    </source>
</reference>
<keyword id="KW-0045">Antibiotic biosynthesis</keyword>
<keyword id="KW-0274">FAD</keyword>
<keyword id="KW-0285">Flavoprotein</keyword>
<keyword id="KW-0503">Monooxygenase</keyword>
<keyword id="KW-0521">NADP</keyword>
<keyword id="KW-0560">Oxidoreductase</keyword>
<dbReference type="EC" id="1.14.13.249" evidence="3"/>
<dbReference type="EMBL" id="KT381192">
    <property type="protein sequence ID" value="ALA99209.1"/>
    <property type="molecule type" value="Genomic_DNA"/>
</dbReference>
<dbReference type="EMBL" id="LC033425">
    <property type="protein sequence ID" value="BAU09309.1"/>
    <property type="molecule type" value="Genomic_DNA"/>
</dbReference>
<dbReference type="RefSeq" id="WP_345228829.1">
    <property type="nucleotide sequence ID" value="NZ_BAAAXE010000015.1"/>
</dbReference>
<dbReference type="SMR" id="A0A0K2JKU1"/>
<dbReference type="KEGG" id="ag:ALA99209"/>
<dbReference type="KEGG" id="ag:BAU09309"/>
<dbReference type="BioCyc" id="MetaCyc:MONOMER-21762"/>
<dbReference type="GO" id="GO:0071949">
    <property type="term" value="F:FAD binding"/>
    <property type="evidence" value="ECO:0007669"/>
    <property type="project" value="InterPro"/>
</dbReference>
<dbReference type="GO" id="GO:0004497">
    <property type="term" value="F:monooxygenase activity"/>
    <property type="evidence" value="ECO:0007669"/>
    <property type="project" value="UniProtKB-KW"/>
</dbReference>
<dbReference type="GO" id="GO:0017000">
    <property type="term" value="P:antibiotic biosynthetic process"/>
    <property type="evidence" value="ECO:0007669"/>
    <property type="project" value="UniProtKB-KW"/>
</dbReference>
<dbReference type="Gene3D" id="3.50.50.60">
    <property type="entry name" value="FAD/NAD(P)-binding domain"/>
    <property type="match status" value="1"/>
</dbReference>
<dbReference type="InterPro" id="IPR002938">
    <property type="entry name" value="FAD-bd"/>
</dbReference>
<dbReference type="InterPro" id="IPR050493">
    <property type="entry name" value="FAD-dep_Monooxygenase_BioMet"/>
</dbReference>
<dbReference type="InterPro" id="IPR036188">
    <property type="entry name" value="FAD/NAD-bd_sf"/>
</dbReference>
<dbReference type="PANTHER" id="PTHR13789:SF318">
    <property type="entry name" value="GERANYLGERANYL DIPHOSPHATE REDUCTASE"/>
    <property type="match status" value="1"/>
</dbReference>
<dbReference type="PANTHER" id="PTHR13789">
    <property type="entry name" value="MONOOXYGENASE"/>
    <property type="match status" value="1"/>
</dbReference>
<dbReference type="Pfam" id="PF01494">
    <property type="entry name" value="FAD_binding_3"/>
    <property type="match status" value="1"/>
</dbReference>
<dbReference type="PRINTS" id="PR00420">
    <property type="entry name" value="RNGMNOXGNASE"/>
</dbReference>
<dbReference type="SUPFAM" id="SSF54373">
    <property type="entry name" value="FAD-linked reductases, C-terminal domain"/>
    <property type="match status" value="1"/>
</dbReference>
<dbReference type="SUPFAM" id="SSF51905">
    <property type="entry name" value="FAD/NAD(P)-binding domain"/>
    <property type="match status" value="1"/>
</dbReference>